<evidence type="ECO:0000255" key="1">
    <source>
        <dbReference type="HAMAP-Rule" id="MF_00531"/>
    </source>
</evidence>
<evidence type="ECO:0000305" key="2"/>
<reference key="1">
    <citation type="submission" date="2007-02" db="EMBL/GenBank/DDBJ databases">
        <title>Complete sequence of Mycobacterium sp. JLS.</title>
        <authorList>
            <consortium name="US DOE Joint Genome Institute"/>
            <person name="Copeland A."/>
            <person name="Lucas S."/>
            <person name="Lapidus A."/>
            <person name="Barry K."/>
            <person name="Detter J.C."/>
            <person name="Glavina del Rio T."/>
            <person name="Hammon N."/>
            <person name="Israni S."/>
            <person name="Dalin E."/>
            <person name="Tice H."/>
            <person name="Pitluck S."/>
            <person name="Chain P."/>
            <person name="Malfatti S."/>
            <person name="Shin M."/>
            <person name="Vergez L."/>
            <person name="Schmutz J."/>
            <person name="Larimer F."/>
            <person name="Land M."/>
            <person name="Hauser L."/>
            <person name="Kyrpides N."/>
            <person name="Mikhailova N."/>
            <person name="Miller C.D."/>
            <person name="Anderson A.J."/>
            <person name="Sims R.C."/>
            <person name="Richardson P."/>
        </authorList>
    </citation>
    <scope>NUCLEOTIDE SEQUENCE [LARGE SCALE GENOMIC DNA]</scope>
    <source>
        <strain>JLS</strain>
    </source>
</reference>
<feature type="chain" id="PRO_1000051080" description="Small ribosomal subunit protein uS19">
    <location>
        <begin position="1"/>
        <end position="93"/>
    </location>
</feature>
<protein>
    <recommendedName>
        <fullName evidence="1">Small ribosomal subunit protein uS19</fullName>
    </recommendedName>
    <alternativeName>
        <fullName evidence="2">30S ribosomal protein S19</fullName>
    </alternativeName>
</protein>
<name>RS19_MYCSJ</name>
<proteinExistence type="inferred from homology"/>
<keyword id="KW-0687">Ribonucleoprotein</keyword>
<keyword id="KW-0689">Ribosomal protein</keyword>
<keyword id="KW-0694">RNA-binding</keyword>
<keyword id="KW-0699">rRNA-binding</keyword>
<sequence>MPRSLKKGPFVDDHLLKKVDVQNDKNTKQVIKTWSRRSTIIPDFIGHTFAVHDGRKHVPVFVTEAMVGHKLGEFAPTRTFKGHIKDDRKSKRR</sequence>
<accession>A3PVC5</accession>
<gene>
    <name evidence="1" type="primary">rpsS</name>
    <name type="ordered locus">Mjls_1044</name>
</gene>
<comment type="function">
    <text evidence="1">Protein S19 forms a complex with S13 that binds strongly to the 16S ribosomal RNA.</text>
</comment>
<comment type="similarity">
    <text evidence="1">Belongs to the universal ribosomal protein uS19 family.</text>
</comment>
<organism>
    <name type="scientific">Mycobacterium sp. (strain JLS)</name>
    <dbReference type="NCBI Taxonomy" id="164757"/>
    <lineage>
        <taxon>Bacteria</taxon>
        <taxon>Bacillati</taxon>
        <taxon>Actinomycetota</taxon>
        <taxon>Actinomycetes</taxon>
        <taxon>Mycobacteriales</taxon>
        <taxon>Mycobacteriaceae</taxon>
        <taxon>Mycobacterium</taxon>
    </lineage>
</organism>
<dbReference type="EMBL" id="CP000580">
    <property type="protein sequence ID" value="ABN96852.1"/>
    <property type="molecule type" value="Genomic_DNA"/>
</dbReference>
<dbReference type="SMR" id="A3PVC5"/>
<dbReference type="KEGG" id="mjl:Mjls_1044"/>
<dbReference type="HOGENOM" id="CLU_144911_0_1_11"/>
<dbReference type="BioCyc" id="MSP164757:G1G8C-1057-MONOMER"/>
<dbReference type="GO" id="GO:0005737">
    <property type="term" value="C:cytoplasm"/>
    <property type="evidence" value="ECO:0007669"/>
    <property type="project" value="UniProtKB-ARBA"/>
</dbReference>
<dbReference type="GO" id="GO:0015935">
    <property type="term" value="C:small ribosomal subunit"/>
    <property type="evidence" value="ECO:0007669"/>
    <property type="project" value="InterPro"/>
</dbReference>
<dbReference type="GO" id="GO:0019843">
    <property type="term" value="F:rRNA binding"/>
    <property type="evidence" value="ECO:0007669"/>
    <property type="project" value="UniProtKB-UniRule"/>
</dbReference>
<dbReference type="GO" id="GO:0003735">
    <property type="term" value="F:structural constituent of ribosome"/>
    <property type="evidence" value="ECO:0007669"/>
    <property type="project" value="InterPro"/>
</dbReference>
<dbReference type="GO" id="GO:0000028">
    <property type="term" value="P:ribosomal small subunit assembly"/>
    <property type="evidence" value="ECO:0007669"/>
    <property type="project" value="TreeGrafter"/>
</dbReference>
<dbReference type="GO" id="GO:0006412">
    <property type="term" value="P:translation"/>
    <property type="evidence" value="ECO:0007669"/>
    <property type="project" value="UniProtKB-UniRule"/>
</dbReference>
<dbReference type="FunFam" id="3.30.860.10:FF:000001">
    <property type="entry name" value="30S ribosomal protein S19"/>
    <property type="match status" value="1"/>
</dbReference>
<dbReference type="Gene3D" id="3.30.860.10">
    <property type="entry name" value="30s Ribosomal Protein S19, Chain A"/>
    <property type="match status" value="1"/>
</dbReference>
<dbReference type="HAMAP" id="MF_00531">
    <property type="entry name" value="Ribosomal_uS19"/>
    <property type="match status" value="1"/>
</dbReference>
<dbReference type="InterPro" id="IPR002222">
    <property type="entry name" value="Ribosomal_uS19"/>
</dbReference>
<dbReference type="InterPro" id="IPR005732">
    <property type="entry name" value="Ribosomal_uS19_bac-type"/>
</dbReference>
<dbReference type="InterPro" id="IPR020934">
    <property type="entry name" value="Ribosomal_uS19_CS"/>
</dbReference>
<dbReference type="InterPro" id="IPR023575">
    <property type="entry name" value="Ribosomal_uS19_SF"/>
</dbReference>
<dbReference type="NCBIfam" id="TIGR01050">
    <property type="entry name" value="rpsS_bact"/>
    <property type="match status" value="1"/>
</dbReference>
<dbReference type="PANTHER" id="PTHR11880">
    <property type="entry name" value="RIBOSOMAL PROTEIN S19P FAMILY MEMBER"/>
    <property type="match status" value="1"/>
</dbReference>
<dbReference type="PANTHER" id="PTHR11880:SF8">
    <property type="entry name" value="SMALL RIBOSOMAL SUBUNIT PROTEIN US19M"/>
    <property type="match status" value="1"/>
</dbReference>
<dbReference type="Pfam" id="PF00203">
    <property type="entry name" value="Ribosomal_S19"/>
    <property type="match status" value="1"/>
</dbReference>
<dbReference type="PIRSF" id="PIRSF002144">
    <property type="entry name" value="Ribosomal_S19"/>
    <property type="match status" value="1"/>
</dbReference>
<dbReference type="PRINTS" id="PR00975">
    <property type="entry name" value="RIBOSOMALS19"/>
</dbReference>
<dbReference type="SUPFAM" id="SSF54570">
    <property type="entry name" value="Ribosomal protein S19"/>
    <property type="match status" value="1"/>
</dbReference>
<dbReference type="PROSITE" id="PS00323">
    <property type="entry name" value="RIBOSOMAL_S19"/>
    <property type="match status" value="1"/>
</dbReference>